<accession>P16117</accession>
<gene>
    <name type="primary">CI</name>
</gene>
<name>RPC1_BP434</name>
<sequence>MSISSRVKSKRIQLGLNQAELAQKVGTTQQSIEQLENGKTKRPRFLPELASALGVSVDWLLNGTSDSNVRFVGHVEPKGKYPLISMVRAGSWCEA</sequence>
<keyword id="KW-0002">3D-structure</keyword>
<keyword id="KW-0238">DNA-binding</keyword>
<keyword id="KW-0678">Repressor</keyword>
<keyword id="KW-0804">Transcription</keyword>
<keyword id="KW-0805">Transcription regulation</keyword>
<feature type="initiator methionine" description="Removed; by host">
    <location>
        <position position="1"/>
    </location>
</feature>
<feature type="chain" id="PRO_0000149714" description="Repressor protein CI">
    <location>
        <begin position="2"/>
        <end position="95" status="greater than"/>
    </location>
</feature>
<feature type="domain" description="HTH cro/C1-type" evidence="1">
    <location>
        <begin position="7"/>
        <end position="60"/>
    </location>
</feature>
<feature type="DNA-binding region" description="H-T-H motif" evidence="1">
    <location>
        <begin position="18"/>
        <end position="37"/>
    </location>
</feature>
<feature type="non-terminal residue">
    <location>
        <position position="95"/>
    </location>
</feature>
<feature type="helix" evidence="2">
    <location>
        <begin position="3"/>
        <end position="13"/>
    </location>
</feature>
<feature type="helix" evidence="2">
    <location>
        <begin position="18"/>
        <end position="25"/>
    </location>
</feature>
<feature type="helix" evidence="2">
    <location>
        <begin position="29"/>
        <end position="36"/>
    </location>
</feature>
<feature type="turn" evidence="3">
    <location>
        <begin position="37"/>
        <end position="39"/>
    </location>
</feature>
<feature type="helix" evidence="2">
    <location>
        <begin position="46"/>
        <end position="52"/>
    </location>
</feature>
<feature type="helix" evidence="2">
    <location>
        <begin position="57"/>
        <end position="62"/>
    </location>
</feature>
<organismHost>
    <name type="scientific">Escherichia coli</name>
    <dbReference type="NCBI Taxonomy" id="562"/>
</organismHost>
<organism>
    <name type="scientific">Enterobacteria phage 434</name>
    <name type="common">Bacteriophage 434</name>
    <dbReference type="NCBI Taxonomy" id="10712"/>
    <lineage>
        <taxon>Viruses</taxon>
        <taxon>Duplodnaviria</taxon>
        <taxon>Heunggongvirae</taxon>
        <taxon>Uroviricota</taxon>
        <taxon>Caudoviricetes</taxon>
        <taxon>Lambdavirus</taxon>
        <taxon>Lambdavirus lambda</taxon>
    </lineage>
</organism>
<proteinExistence type="evidence at protein level"/>
<dbReference type="EMBL" id="Y00118">
    <property type="protein sequence ID" value="CAA68301.1"/>
    <property type="molecule type" value="Genomic_DNA"/>
</dbReference>
<dbReference type="PDB" id="1PER">
    <property type="method" value="X-ray"/>
    <property type="resolution" value="2.50 A"/>
    <property type="chains" value="L/R=2-70"/>
</dbReference>
<dbReference type="PDB" id="1PRA">
    <property type="method" value="NMR"/>
    <property type="chains" value="A=2-70"/>
</dbReference>
<dbReference type="PDB" id="1R63">
    <property type="method" value="NMR"/>
    <property type="chains" value="A=2-64"/>
</dbReference>
<dbReference type="PDB" id="1R69">
    <property type="method" value="X-ray"/>
    <property type="resolution" value="2.00 A"/>
    <property type="chains" value="A=2-70"/>
</dbReference>
<dbReference type="PDB" id="1RPE">
    <property type="method" value="X-ray"/>
    <property type="resolution" value="2.50 A"/>
    <property type="chains" value="L/R=2-70"/>
</dbReference>
<dbReference type="PDB" id="1SQ8">
    <property type="method" value="NMR"/>
    <property type="chains" value="A=11-63"/>
</dbReference>
<dbReference type="PDB" id="2OR1">
    <property type="method" value="X-ray"/>
    <property type="resolution" value="2.50 A"/>
    <property type="chains" value="L/R=2-70"/>
</dbReference>
<dbReference type="PDB" id="2R63">
    <property type="method" value="NMR"/>
    <property type="chains" value="A=2-64"/>
</dbReference>
<dbReference type="PDBsum" id="1PER"/>
<dbReference type="PDBsum" id="1PRA"/>
<dbReference type="PDBsum" id="1R63"/>
<dbReference type="PDBsum" id="1R69"/>
<dbReference type="PDBsum" id="1RPE"/>
<dbReference type="PDBsum" id="1SQ8"/>
<dbReference type="PDBsum" id="2OR1"/>
<dbReference type="PDBsum" id="2R63"/>
<dbReference type="BMRB" id="P16117"/>
<dbReference type="SMR" id="P16117"/>
<dbReference type="EvolutionaryTrace" id="P16117"/>
<dbReference type="GO" id="GO:0003677">
    <property type="term" value="F:DNA binding"/>
    <property type="evidence" value="ECO:0007669"/>
    <property type="project" value="UniProtKB-KW"/>
</dbReference>
<dbReference type="CDD" id="cd00093">
    <property type="entry name" value="HTH_XRE"/>
    <property type="match status" value="1"/>
</dbReference>
<dbReference type="Gene3D" id="1.10.260.40">
    <property type="entry name" value="lambda repressor-like DNA-binding domains"/>
    <property type="match status" value="1"/>
</dbReference>
<dbReference type="InterPro" id="IPR001387">
    <property type="entry name" value="Cro/C1-type_HTH"/>
</dbReference>
<dbReference type="InterPro" id="IPR010982">
    <property type="entry name" value="Lambda_DNA-bd_dom_sf"/>
</dbReference>
<dbReference type="Pfam" id="PF01381">
    <property type="entry name" value="HTH_3"/>
    <property type="match status" value="1"/>
</dbReference>
<dbReference type="SMART" id="SM00530">
    <property type="entry name" value="HTH_XRE"/>
    <property type="match status" value="1"/>
</dbReference>
<dbReference type="SUPFAM" id="SSF47413">
    <property type="entry name" value="lambda repressor-like DNA-binding domains"/>
    <property type="match status" value="1"/>
</dbReference>
<dbReference type="PROSITE" id="PS50943">
    <property type="entry name" value="HTH_CROC1"/>
    <property type="match status" value="1"/>
</dbReference>
<protein>
    <recommendedName>
        <fullName>Repressor protein CI</fullName>
    </recommendedName>
</protein>
<reference key="1">
    <citation type="journal article" date="1987" name="Nucleic Acids Res.">
        <title>Determination of vector: insert junctions in lambda gt10 cDNAs that do not recut with EcoRI. Nucleotide sequence of the lambda imm434 HindIII-EcoRI DNA fragment encoding part of the cI protein.</title>
        <authorList>
            <person name="Kuziel W.A."/>
            <person name="Tucker P.W."/>
        </authorList>
    </citation>
    <scope>NUCLEOTIDE SEQUENCE [GENOMIC DNA]</scope>
</reference>
<reference key="2">
    <citation type="journal article" date="1989" name="J. Mol. Biol.">
        <title>Structure of the amino-terminal domain of phage 434 repressor at 2.0-A resolution.</title>
        <authorList>
            <person name="Mondragon A."/>
            <person name="Subbiah S."/>
            <person name="Almo S.C."/>
            <person name="Drottar M."/>
            <person name="Harrison S.C."/>
        </authorList>
    </citation>
    <scope>X-RAY CRYSTALLOGRAPHY (2.0 ANGSTROMS) OF 1-67</scope>
</reference>
<reference key="3">
    <citation type="journal article" date="1988" name="Science">
        <title>Recognition of a DNA operator by the repressor of phage 434: a view at high resolution.</title>
        <authorList>
            <person name="Aggarwal A.K."/>
            <person name="Rodgers D.W."/>
            <person name="Drottar M."/>
            <person name="Ptashne M."/>
            <person name="Harrison S.C."/>
        </authorList>
    </citation>
    <scope>X-RAY CRYSTALLOGRAPHY (2.5 ANGSTROMS) OF 1-67</scope>
</reference>
<reference key="4">
    <citation type="journal article" date="1992" name="J. Mol. Biol.">
        <title>Determination of the nuclear magnetic resonance solution structure of the DNA-binding domain (residues 1 to 69) of the 434 repressor and comparison with the X-ray crystal structure.</title>
        <authorList>
            <person name="Neri D."/>
            <person name="Billeter M."/>
            <person name="Wuethrich K."/>
        </authorList>
    </citation>
    <scope>STRUCTURE BY NMR OF 1-67</scope>
</reference>
<reference key="5">
    <citation type="journal article" date="1996" name="J. Mol. Biol.">
        <title>Structural role of a buried salt bridge in the 434 repressor DNA-binding domain.</title>
        <authorList>
            <person name="Pervushin K."/>
            <person name="Billeter M."/>
            <person name="Siegal G."/>
            <person name="Wuethrich K."/>
        </authorList>
    </citation>
    <scope>STRUCTURE BY NMR</scope>
</reference>
<comment type="function">
    <text>Binds to two sets of three contiguous operator sites in the phage genome.</text>
</comment>
<comment type="subunit">
    <text>Homodimer, when bound to an operator.</text>
</comment>
<evidence type="ECO:0000255" key="1">
    <source>
        <dbReference type="PROSITE-ProRule" id="PRU00257"/>
    </source>
</evidence>
<evidence type="ECO:0007829" key="2">
    <source>
        <dbReference type="PDB" id="1R69"/>
    </source>
</evidence>
<evidence type="ECO:0007829" key="3">
    <source>
        <dbReference type="PDB" id="2OR1"/>
    </source>
</evidence>